<proteinExistence type="inferred from homology"/>
<protein>
    <recommendedName>
        <fullName>Peptidyl-prolyl cis-trans isomerase D</fullName>
        <shortName>PPIase D</shortName>
        <ecNumber>5.2.1.8</ecNumber>
    </recommendedName>
    <alternativeName>
        <fullName>Cyclophilin D</fullName>
    </alternativeName>
    <alternativeName>
        <fullName>Rotamase D</fullName>
    </alternativeName>
</protein>
<name>PPID_RHIO9</name>
<comment type="function">
    <text evidence="1">PPIases accelerate the folding of proteins. It catalyzes the cis-trans isomerization of proline imidic peptide bonds in oligopeptides (By similarity).</text>
</comment>
<comment type="catalytic activity">
    <reaction>
        <text>[protein]-peptidylproline (omega=180) = [protein]-peptidylproline (omega=0)</text>
        <dbReference type="Rhea" id="RHEA:16237"/>
        <dbReference type="Rhea" id="RHEA-COMP:10747"/>
        <dbReference type="Rhea" id="RHEA-COMP:10748"/>
        <dbReference type="ChEBI" id="CHEBI:83833"/>
        <dbReference type="ChEBI" id="CHEBI:83834"/>
        <dbReference type="EC" id="5.2.1.8"/>
    </reaction>
</comment>
<comment type="subcellular location">
    <subcellularLocation>
        <location evidence="1">Cytoplasm</location>
    </subcellularLocation>
</comment>
<comment type="similarity">
    <text evidence="3">Belongs to the cyclophilin-type PPIase family. PPIase D subfamily.</text>
</comment>
<dbReference type="EC" id="5.2.1.8"/>
<dbReference type="EMBL" id="CH476732">
    <property type="protein sequence ID" value="EIE75804.1"/>
    <property type="molecule type" value="Genomic_DNA"/>
</dbReference>
<dbReference type="SMR" id="P0C1I1"/>
<dbReference type="FunCoup" id="P0C1I1">
    <property type="interactions" value="797"/>
</dbReference>
<dbReference type="STRING" id="246409.P0C1I1"/>
<dbReference type="VEuPathDB" id="FungiDB:RO3G_00508"/>
<dbReference type="eggNOG" id="KOG0546">
    <property type="taxonomic scope" value="Eukaryota"/>
</dbReference>
<dbReference type="InParanoid" id="P0C1I1"/>
<dbReference type="OMA" id="EMEQNCN"/>
<dbReference type="OrthoDB" id="39896at4827"/>
<dbReference type="Proteomes" id="UP000009138">
    <property type="component" value="Unassembled WGS sequence"/>
</dbReference>
<dbReference type="GO" id="GO:0005737">
    <property type="term" value="C:cytoplasm"/>
    <property type="evidence" value="ECO:0007669"/>
    <property type="project" value="UniProtKB-SubCell"/>
</dbReference>
<dbReference type="GO" id="GO:0043231">
    <property type="term" value="C:intracellular membrane-bounded organelle"/>
    <property type="evidence" value="ECO:0007669"/>
    <property type="project" value="TreeGrafter"/>
</dbReference>
<dbReference type="GO" id="GO:0016018">
    <property type="term" value="F:cyclosporin A binding"/>
    <property type="evidence" value="ECO:0007669"/>
    <property type="project" value="TreeGrafter"/>
</dbReference>
<dbReference type="GO" id="GO:0003755">
    <property type="term" value="F:peptidyl-prolyl cis-trans isomerase activity"/>
    <property type="evidence" value="ECO:0007669"/>
    <property type="project" value="UniProtKB-KW"/>
</dbReference>
<dbReference type="GO" id="GO:0043022">
    <property type="term" value="F:ribosome binding"/>
    <property type="evidence" value="ECO:0007669"/>
    <property type="project" value="EnsemblFungi"/>
</dbReference>
<dbReference type="GO" id="GO:0051082">
    <property type="term" value="F:unfolded protein binding"/>
    <property type="evidence" value="ECO:0007669"/>
    <property type="project" value="EnsemblFungi"/>
</dbReference>
<dbReference type="GO" id="GO:0042026">
    <property type="term" value="P:protein refolding"/>
    <property type="evidence" value="ECO:0007669"/>
    <property type="project" value="EnsemblFungi"/>
</dbReference>
<dbReference type="CDD" id="cd01926">
    <property type="entry name" value="cyclophilin_ABH_like"/>
    <property type="match status" value="1"/>
</dbReference>
<dbReference type="FunFam" id="2.40.100.10:FF:000009">
    <property type="entry name" value="Peptidyl-prolyl cis-trans isomerase D"/>
    <property type="match status" value="1"/>
</dbReference>
<dbReference type="FunFam" id="1.25.40.10:FF:000029">
    <property type="entry name" value="peptidyl-prolyl cis-trans isomerase D"/>
    <property type="match status" value="1"/>
</dbReference>
<dbReference type="Gene3D" id="2.40.100.10">
    <property type="entry name" value="Cyclophilin-like"/>
    <property type="match status" value="1"/>
</dbReference>
<dbReference type="Gene3D" id="1.25.40.10">
    <property type="entry name" value="Tetratricopeptide repeat domain"/>
    <property type="match status" value="1"/>
</dbReference>
<dbReference type="InterPro" id="IPR029000">
    <property type="entry name" value="Cyclophilin-like_dom_sf"/>
</dbReference>
<dbReference type="InterPro" id="IPR020892">
    <property type="entry name" value="Cyclophilin-type_PPIase_CS"/>
</dbReference>
<dbReference type="InterPro" id="IPR002130">
    <property type="entry name" value="Cyclophilin-type_PPIase_dom"/>
</dbReference>
<dbReference type="InterPro" id="IPR011990">
    <property type="entry name" value="TPR-like_helical_dom_sf"/>
</dbReference>
<dbReference type="InterPro" id="IPR013105">
    <property type="entry name" value="TPR_2"/>
</dbReference>
<dbReference type="InterPro" id="IPR019734">
    <property type="entry name" value="TPR_rpt"/>
</dbReference>
<dbReference type="PANTHER" id="PTHR11071">
    <property type="entry name" value="PEPTIDYL-PROLYL CIS-TRANS ISOMERASE"/>
    <property type="match status" value="1"/>
</dbReference>
<dbReference type="PANTHER" id="PTHR11071:SF561">
    <property type="entry name" value="PEPTIDYL-PROLYL CIS-TRANS ISOMERASE D-RELATED"/>
    <property type="match status" value="1"/>
</dbReference>
<dbReference type="Pfam" id="PF00160">
    <property type="entry name" value="Pro_isomerase"/>
    <property type="match status" value="1"/>
</dbReference>
<dbReference type="Pfam" id="PF07719">
    <property type="entry name" value="TPR_2"/>
    <property type="match status" value="1"/>
</dbReference>
<dbReference type="PRINTS" id="PR00153">
    <property type="entry name" value="CSAPPISMRASE"/>
</dbReference>
<dbReference type="SMART" id="SM00028">
    <property type="entry name" value="TPR"/>
    <property type="match status" value="3"/>
</dbReference>
<dbReference type="SUPFAM" id="SSF50891">
    <property type="entry name" value="Cyclophilin-like"/>
    <property type="match status" value="1"/>
</dbReference>
<dbReference type="SUPFAM" id="SSF48452">
    <property type="entry name" value="TPR-like"/>
    <property type="match status" value="1"/>
</dbReference>
<dbReference type="PROSITE" id="PS00170">
    <property type="entry name" value="CSA_PPIASE_1"/>
    <property type="match status" value="1"/>
</dbReference>
<dbReference type="PROSITE" id="PS50072">
    <property type="entry name" value="CSA_PPIASE_2"/>
    <property type="match status" value="1"/>
</dbReference>
<dbReference type="PROSITE" id="PS50005">
    <property type="entry name" value="TPR"/>
    <property type="match status" value="2"/>
</dbReference>
<dbReference type="PROSITE" id="PS50293">
    <property type="entry name" value="TPR_REGION"/>
    <property type="match status" value="2"/>
</dbReference>
<accession>P0C1I1</accession>
<accession>I1BHX4</accession>
<reference key="1">
    <citation type="journal article" date="2009" name="PLoS Genet.">
        <title>Genomic analysis of the basal lineage fungus Rhizopus oryzae reveals a whole-genome duplication.</title>
        <authorList>
            <person name="Ma L.-J."/>
            <person name="Ibrahim A.S."/>
            <person name="Skory C."/>
            <person name="Grabherr M.G."/>
            <person name="Burger G."/>
            <person name="Butler M."/>
            <person name="Elias M."/>
            <person name="Idnurm A."/>
            <person name="Lang B.F."/>
            <person name="Sone T."/>
            <person name="Abe A."/>
            <person name="Calvo S.E."/>
            <person name="Corrochano L.M."/>
            <person name="Engels R."/>
            <person name="Fu J."/>
            <person name="Hansberg W."/>
            <person name="Kim J.-M."/>
            <person name="Kodira C.D."/>
            <person name="Koehrsen M.J."/>
            <person name="Liu B."/>
            <person name="Miranda-Saavedra D."/>
            <person name="O'Leary S."/>
            <person name="Ortiz-Castellanos L."/>
            <person name="Poulter R."/>
            <person name="Rodriguez-Romero J."/>
            <person name="Ruiz-Herrera J."/>
            <person name="Shen Y.-Q."/>
            <person name="Zeng Q."/>
            <person name="Galagan J."/>
            <person name="Birren B.W."/>
            <person name="Cuomo C.A."/>
            <person name="Wickes B.L."/>
        </authorList>
    </citation>
    <scope>NUCLEOTIDE SEQUENCE [LARGE SCALE GENOMIC DNA]</scope>
    <source>
        <strain>RA 99-880 / ATCC MYA-4621 / FGSC 9543 / NRRL 43880</strain>
    </source>
</reference>
<keyword id="KW-0963">Cytoplasm</keyword>
<keyword id="KW-0413">Isomerase</keyword>
<keyword id="KW-1185">Reference proteome</keyword>
<keyword id="KW-0677">Repeat</keyword>
<keyword id="KW-0697">Rotamase</keyword>
<keyword id="KW-0802">TPR repeat</keyword>
<organism>
    <name type="scientific">Rhizopus delemar (strain RA 99-880 / ATCC MYA-4621 / FGSC 9543 / NRRL 43880)</name>
    <name type="common">Mucormycosis agent</name>
    <name type="synonym">Rhizopus arrhizus var. delemar</name>
    <dbReference type="NCBI Taxonomy" id="246409"/>
    <lineage>
        <taxon>Eukaryota</taxon>
        <taxon>Fungi</taxon>
        <taxon>Fungi incertae sedis</taxon>
        <taxon>Mucoromycota</taxon>
        <taxon>Mucoromycotina</taxon>
        <taxon>Mucoromycetes</taxon>
        <taxon>Mucorales</taxon>
        <taxon>Mucorineae</taxon>
        <taxon>Rhizopodaceae</taxon>
        <taxon>Rhizopus</taxon>
    </lineage>
</organism>
<feature type="chain" id="PRO_0000244714" description="Peptidyl-prolyl cis-trans isomerase D">
    <location>
        <begin position="1"/>
        <end position="364"/>
    </location>
</feature>
<feature type="domain" description="PPIase cyclophilin-type" evidence="2">
    <location>
        <begin position="7"/>
        <end position="170"/>
    </location>
</feature>
<feature type="repeat" description="TPR 1">
    <location>
        <begin position="208"/>
        <end position="241"/>
    </location>
</feature>
<feature type="repeat" description="TPR 2">
    <location>
        <begin position="261"/>
        <end position="294"/>
    </location>
</feature>
<feature type="repeat" description="TPR 3">
    <location>
        <begin position="301"/>
        <end position="334"/>
    </location>
</feature>
<evidence type="ECO:0000250" key="1"/>
<evidence type="ECO:0000255" key="2">
    <source>
        <dbReference type="PROSITE-ProRule" id="PRU00156"/>
    </source>
</evidence>
<evidence type="ECO:0000305" key="3"/>
<gene>
    <name type="primary">cyp12</name>
    <name type="ORF">RO3G_00508</name>
</gene>
<sequence length="364" mass="40405">MSNPRVYFDITIGNKPEGRIVFELFKDIVPKTAENFRALCTGEKGEGKSGKPLSYQGSLFHRIIKNFMIQGGDFTAGNGTGGESIYGEKFEDENFVLKHEKPFLLSMANAGPGTNGSQFFITTVPTPHLDGKHVVFGKVLKGKAVVRALENLETVSDRPVEDAVIAKCGELAEGEDDGIRASEDGDVYEEYPDDHEGPKEPNDVLQIATHLKDIGNTYFKKGDHANAAKKYLKAIRYLNEKPAFDENDPKELEGKFAAIKIPCYLNRSMCALKLGEYSECVKVTTTVLEYDSKYLKPTDITKAYFRRGSAKMNTRDFEGAIEDFEKAHEKDPEDAGIKKELANAKAKLAAKKQKEKSAYAKMFA</sequence>